<organism>
    <name type="scientific">Tulipa gesneriana</name>
    <name type="common">Garden tulip</name>
    <dbReference type="NCBI Taxonomy" id="13306"/>
    <lineage>
        <taxon>Eukaryota</taxon>
        <taxon>Viridiplantae</taxon>
        <taxon>Streptophyta</taxon>
        <taxon>Embryophyta</taxon>
        <taxon>Tracheophyta</taxon>
        <taxon>Spermatophyta</taxon>
        <taxon>Magnoliopsida</taxon>
        <taxon>Liliopsida</taxon>
        <taxon>Liliales</taxon>
        <taxon>Liliaceae</taxon>
        <taxon>Tulipa</taxon>
    </lineage>
</organism>
<dbReference type="EC" id="4.2.99.22"/>
<dbReference type="EMBL" id="AB749811">
    <property type="protein sequence ID" value="BAN28570.1"/>
    <property type="molecule type" value="mRNA"/>
</dbReference>
<dbReference type="SMR" id="R4X247"/>
<dbReference type="ESTHER" id="tulge-tcab4">
    <property type="family name" value="Plant_carboxylesterase"/>
</dbReference>
<dbReference type="GO" id="GO:0009501">
    <property type="term" value="C:amyloplast"/>
    <property type="evidence" value="ECO:0007669"/>
    <property type="project" value="UniProtKB-SubCell"/>
</dbReference>
<dbReference type="GO" id="GO:0016787">
    <property type="term" value="F:hydrolase activity"/>
    <property type="evidence" value="ECO:0007669"/>
    <property type="project" value="InterPro"/>
</dbReference>
<dbReference type="GO" id="GO:0016829">
    <property type="term" value="F:lyase activity"/>
    <property type="evidence" value="ECO:0007669"/>
    <property type="project" value="UniProtKB-KW"/>
</dbReference>
<dbReference type="GO" id="GO:0006952">
    <property type="term" value="P:defense response"/>
    <property type="evidence" value="ECO:0007669"/>
    <property type="project" value="UniProtKB-KW"/>
</dbReference>
<dbReference type="Gene3D" id="3.40.50.1820">
    <property type="entry name" value="alpha/beta hydrolase"/>
    <property type="match status" value="1"/>
</dbReference>
<dbReference type="InterPro" id="IPR013094">
    <property type="entry name" value="AB_hydrolase_3"/>
</dbReference>
<dbReference type="InterPro" id="IPR029058">
    <property type="entry name" value="AB_hydrolase_fold"/>
</dbReference>
<dbReference type="InterPro" id="IPR050466">
    <property type="entry name" value="Carboxylest/Gibb_receptor"/>
</dbReference>
<dbReference type="PANTHER" id="PTHR23024">
    <property type="entry name" value="ARYLACETAMIDE DEACETYLASE"/>
    <property type="match status" value="1"/>
</dbReference>
<dbReference type="PANTHER" id="PTHR23024:SF577">
    <property type="entry name" value="CARBOXYLESTERASE 2-RELATED"/>
    <property type="match status" value="1"/>
</dbReference>
<dbReference type="Pfam" id="PF07859">
    <property type="entry name" value="Abhydrolase_3"/>
    <property type="match status" value="1"/>
</dbReference>
<dbReference type="SUPFAM" id="SSF53474">
    <property type="entry name" value="alpha/beta-Hydrolases"/>
    <property type="match status" value="1"/>
</dbReference>
<evidence type="ECO:0000250" key="1"/>
<evidence type="ECO:0000305" key="2"/>
<sequence length="374" mass="40482">MSVALFCGPPPAVSFGCKDGRGRKGMVRSKDIVRQTVKPPAHACRLIGWNKYPGSVVPTNSSLSPSPTALDDEIELDPSPFLIIYKDGRIERLKGTTVIPACPEVATKDVIIDPATGVSVRLYLPNVVDLPSKKLPVLVYFHGGGFVIENTGSPNYHNYLTLLAAKSGLLIVSVNYRLAPEHPIPASFDDCMAGFNWVVSHSAGPAPEPWLARHGDLTQILISGDSAGGTVTHYVLLRADAGVIEGAALVHPYFLGSKRLENQTEEDFEFHEKLWRLSTPDTEGLDDPLINPLAPGAPSLAGLKCKRAVVFVAELDFLVERGRMYYDALVKSGWGGEAELVHQKGVGHVFHLSDYSGDVSVDMMAKMVAFLRGE</sequence>
<feature type="transit peptide" description="Amyloplast" evidence="1">
    <location>
        <begin position="1"/>
        <end position="68"/>
    </location>
</feature>
<feature type="chain" id="PRO_0000423870" description="Probable tuliposide A-converting enzyme b6, amyloplastic">
    <location>
        <begin position="69"/>
        <end position="374"/>
    </location>
</feature>
<feature type="active site" description="Acyl-ester intermediate" evidence="1">
    <location>
        <position position="226"/>
    </location>
</feature>
<feature type="active site" description="Charge relay system" evidence="1">
    <location>
        <position position="316"/>
    </location>
</feature>
<feature type="active site" description="Charge relay system" evidence="1">
    <location>
        <position position="348"/>
    </location>
</feature>
<reference key="1">
    <citation type="journal article" date="2013" name="Biosci. Biotechnol. Biochem.">
        <title>Molecular diversity of tuliposide A-converting enzyme in the tulip.</title>
        <authorList>
            <person name="Nomura T."/>
            <person name="Tsuchigami A."/>
            <person name="Ogita S."/>
            <person name="Kato Y."/>
        </authorList>
    </citation>
    <scope>NUCLEOTIDE SEQUENCE [MRNA]</scope>
    <source>
        <tissue>Bulb</tissue>
    </source>
</reference>
<name>TCAB4_TULGE</name>
<comment type="function">
    <text evidence="1">Lactone-forming carboxylesterases, specifically catalyzing intramolecular transesterification, but not hydrolysis. Involved in the biosynthesis of tulipalins, defensive chemicals that show antimicrobial activities against a broad range of strains of bacteria and fungi. Substrates are 6-tuliposide A &gt; 6-tuliposide B (By similarity).</text>
</comment>
<comment type="catalytic activity">
    <reaction>
        <text>6-tuliposide A = tulipalin A + D-glucose</text>
        <dbReference type="Rhea" id="RHEA:36071"/>
        <dbReference type="ChEBI" id="CHEBI:4167"/>
        <dbReference type="ChEBI" id="CHEBI:72781"/>
        <dbReference type="ChEBI" id="CHEBI:104120"/>
        <dbReference type="EC" id="4.2.99.22"/>
    </reaction>
</comment>
<comment type="subunit">
    <text evidence="1">Homodimer.</text>
</comment>
<comment type="subcellular location">
    <subcellularLocation>
        <location evidence="1">Plastid</location>
        <location evidence="1">Amyloplast</location>
    </subcellularLocation>
</comment>
<comment type="miscellaneous">
    <text evidence="1">6-tuliposide A and tuliposide A-converting enzyme, which are compartmentalized in the vacuoles and plastids respectively, come into contact with each other for the enzyme reaction releasing toxic tulipalin A upon cell disruption by pathogen infection or herbivore predation.</text>
</comment>
<comment type="similarity">
    <text evidence="2">Belongs to the AB hydrolase superfamily.</text>
</comment>
<comment type="caution">
    <text evidence="2">No genomic clone corresponding to this cDNA could be found.</text>
</comment>
<protein>
    <recommendedName>
        <fullName>Probable tuliposide A-converting enzyme b6, amyloplastic</fullName>
        <shortName>TgTCEA-b6</shortName>
        <ecNumber>4.2.99.22</ecNumber>
    </recommendedName>
</protein>
<gene>
    <name type="primary">TCEA-B6</name>
</gene>
<keyword id="KW-0035">Amyloplast</keyword>
<keyword id="KW-0456">Lyase</keyword>
<keyword id="KW-0611">Plant defense</keyword>
<keyword id="KW-0934">Plastid</keyword>
<keyword id="KW-0809">Transit peptide</keyword>
<accession>R4X247</accession>
<proteinExistence type="evidence at transcript level"/>